<dbReference type="EMBL" id="U29269">
    <property type="protein sequence ID" value="AAC47200.1"/>
    <property type="molecule type" value="mRNA"/>
</dbReference>
<dbReference type="EMBL" id="U29271">
    <property type="protein sequence ID" value="AAC47202.1"/>
    <property type="molecule type" value="mRNA"/>
</dbReference>
<dbReference type="EMBL" id="U29272">
    <property type="protein sequence ID" value="AAC47203.1"/>
    <property type="molecule type" value="mRNA"/>
</dbReference>
<dbReference type="EMBL" id="U29273">
    <property type="protein sequence ID" value="AAC47204.1"/>
    <property type="molecule type" value="mRNA"/>
</dbReference>
<dbReference type="EMBL" id="U29274">
    <property type="protein sequence ID" value="AAC47205.1"/>
    <property type="molecule type" value="mRNA"/>
</dbReference>
<dbReference type="EMBL" id="U29275">
    <property type="protein sequence ID" value="AAC47206.1"/>
    <property type="molecule type" value="mRNA"/>
</dbReference>
<dbReference type="EMBL" id="U29276">
    <property type="protein sequence ID" value="AAC47207.1"/>
    <property type="molecule type" value="mRNA"/>
</dbReference>
<dbReference type="PIR" id="A53613">
    <property type="entry name" value="A53613"/>
</dbReference>
<dbReference type="SMR" id="P36983"/>
<dbReference type="ArachnoServer" id="AS000405">
    <property type="toxin name" value="U1-plectoxin-Pt1a"/>
</dbReference>
<dbReference type="GO" id="GO:0005576">
    <property type="term" value="C:extracellular region"/>
    <property type="evidence" value="ECO:0007669"/>
    <property type="project" value="UniProtKB-SubCell"/>
</dbReference>
<dbReference type="GO" id="GO:0008200">
    <property type="term" value="F:ion channel inhibitor activity"/>
    <property type="evidence" value="ECO:0007669"/>
    <property type="project" value="InterPro"/>
</dbReference>
<dbReference type="GO" id="GO:0090729">
    <property type="term" value="F:toxin activity"/>
    <property type="evidence" value="ECO:0007669"/>
    <property type="project" value="UniProtKB-KW"/>
</dbReference>
<dbReference type="InterPro" id="IPR004169">
    <property type="entry name" value="Spidertoxin"/>
</dbReference>
<dbReference type="Pfam" id="PF02819">
    <property type="entry name" value="Toxin_9"/>
    <property type="match status" value="1"/>
</dbReference>
<accession>P36983</accession>
<comment type="function">
    <text>Potent toxin that may paralyze and/or kill insect pests such as H.virescens (lepidoptera), S.exigua (beet armyworm) and M.sexta (tobacco hornworm).</text>
</comment>
<comment type="subcellular location">
    <subcellularLocation>
        <location evidence="4">Secreted</location>
    </subcellularLocation>
</comment>
<comment type="tissue specificity">
    <text evidence="6">Expressed by the venom gland.</text>
</comment>
<comment type="domain">
    <text evidence="5">The presence of a 'disulfide through disulfide knot' structurally defines this protein as a knottin.</text>
</comment>
<comment type="PTM">
    <text>Plectoxin-5 presumably undergoes post-translational modification to give rise to plectoxin-6.</text>
</comment>
<comment type="similarity">
    <text evidence="5">Belongs to the neurotoxin 02 (plectoxin) family. 02 (plectoxin) subfamily.</text>
</comment>
<keyword id="KW-0903">Direct protein sequencing</keyword>
<keyword id="KW-1015">Disulfide bond</keyword>
<keyword id="KW-0960">Knottin</keyword>
<keyword id="KW-0449">Lipoprotein</keyword>
<keyword id="KW-0528">Neurotoxin</keyword>
<keyword id="KW-0564">Palmitate</keyword>
<keyword id="KW-0964">Secreted</keyword>
<keyword id="KW-0732">Signal</keyword>
<keyword id="KW-0800">Toxin</keyword>
<sequence length="82" mass="9241">MKHLIFSSALVCALVVCTFAEEQVNVPFLPDERAVKCIGWQETCNGNLPCCNECVMCECNIMGQNCRCNHPKATNECESRRR</sequence>
<reference key="1">
    <citation type="journal article" date="1996" name="Insect Biochem. Mol. Biol.">
        <title>Molecular cloning and sequencing of cDNAs encoding insecticidal peptides from the primitive hunting spider, Plectreurys tristis (Simon).</title>
        <authorList>
            <person name="Leisy D.J."/>
            <person name="Mattson J.D."/>
            <person name="Quistad G.B."/>
            <person name="Kramer S.J."/>
            <person name="van Beek N."/>
            <person name="Tsai L.W."/>
            <person name="Enderlin F.E."/>
            <person name="Woodworth A.R."/>
            <person name="Digan M.E."/>
        </authorList>
    </citation>
    <scope>NUCLEOTIDE SEQUENCE [MRNA]</scope>
    <source>
        <tissue>Venom gland</tissue>
    </source>
</reference>
<reference key="2">
    <citation type="journal article" date="1994" name="J. Biol. Chem.">
        <title>Isolation and sequencing of insecticidal peptides from the primitive hunting spider, Plectreurys tristis (Simon).</title>
        <authorList>
            <person name="Quistad G.B."/>
            <person name="Skinner W.S."/>
        </authorList>
    </citation>
    <scope>PROTEIN SEQUENCE OF 34-79</scope>
    <scope>SUBCELLULAR LOCATION</scope>
    <source>
        <tissue>Venom</tissue>
    </source>
</reference>
<protein>
    <recommendedName>
        <fullName evidence="5">U1-plectoxin-Pt1a</fullName>
        <shortName evidence="5">U1-PLTX-Pt1a</shortName>
    </recommendedName>
    <alternativeName>
        <fullName>PLT-V/PLT-VI</fullName>
        <shortName>PLTVI</shortName>
    </alternativeName>
    <alternativeName>
        <fullName>Plectoxin V/VI</fullName>
    </alternativeName>
    <alternativeName>
        <fullName>Plectoxin-5/6</fullName>
    </alternativeName>
</protein>
<name>TX22G_PLETR</name>
<proteinExistence type="evidence at protein level"/>
<organism>
    <name type="scientific">Plectreurys tristis</name>
    <name type="common">Spider</name>
    <name type="synonym">Plectreurys bispinosus</name>
    <dbReference type="NCBI Taxonomy" id="33319"/>
    <lineage>
        <taxon>Eukaryota</taxon>
        <taxon>Metazoa</taxon>
        <taxon>Ecdysozoa</taxon>
        <taxon>Arthropoda</taxon>
        <taxon>Chelicerata</taxon>
        <taxon>Arachnida</taxon>
        <taxon>Araneae</taxon>
        <taxon>Araneomorphae</taxon>
        <taxon>Haplogynae</taxon>
        <taxon>Pholcoidea</taxon>
        <taxon>Plectreuridae</taxon>
        <taxon>Plectreurys</taxon>
    </lineage>
</organism>
<evidence type="ECO:0000250" key="1">
    <source>
        <dbReference type="UniProtKB" id="P34079"/>
    </source>
</evidence>
<evidence type="ECO:0000250" key="2">
    <source>
        <dbReference type="UniProtKB" id="P83559"/>
    </source>
</evidence>
<evidence type="ECO:0000255" key="3"/>
<evidence type="ECO:0000269" key="4">
    <source>
    </source>
</evidence>
<evidence type="ECO:0000305" key="5"/>
<evidence type="ECO:0000305" key="6">
    <source>
    </source>
</evidence>
<feature type="signal peptide" evidence="3">
    <location>
        <begin position="1"/>
        <end position="20"/>
    </location>
</feature>
<feature type="propeptide" id="PRO_0000035533" evidence="4">
    <location>
        <begin position="21"/>
        <end position="33"/>
    </location>
</feature>
<feature type="chain" id="PRO_0000035534" description="U1-plectoxin-Pt1a" evidence="4">
    <location>
        <begin position="34"/>
        <end position="79"/>
    </location>
</feature>
<feature type="propeptide" id="PRO_0000035535">
    <location>
        <begin position="80"/>
        <end position="82"/>
    </location>
</feature>
<feature type="lipid moiety-binding region" description="O-palmitoyl serine" evidence="1">
    <location>
        <position position="79"/>
    </location>
</feature>
<feature type="disulfide bond" evidence="2">
    <location>
        <begin position="37"/>
        <end position="51"/>
    </location>
</feature>
<feature type="disulfide bond" evidence="2">
    <location>
        <begin position="44"/>
        <end position="57"/>
    </location>
</feature>
<feature type="disulfide bond" evidence="2">
    <location>
        <begin position="50"/>
        <end position="68"/>
    </location>
</feature>
<feature type="disulfide bond" evidence="2">
    <location>
        <begin position="54"/>
        <end position="77"/>
    </location>
</feature>
<feature type="disulfide bond" evidence="2">
    <location>
        <begin position="59"/>
        <end position="66"/>
    </location>
</feature>
<feature type="sequence variant" description="In clones PSCI267, PSCI268, PSCI270 and PSCI272.">
    <original>FS</original>
    <variation>LA</variation>
    <location>
        <begin position="6"/>
        <end position="7"/>
    </location>
</feature>
<feature type="sequence variant" description="In clones PSCI268, PSCI270 and PSCI272.">
    <original>V</original>
    <variation>I</variation>
    <location>
        <position position="11"/>
    </location>
</feature>
<feature type="sequence variant" description="In clones PSCI268, PSCI270 and PSCI272.">
    <original>F</original>
    <variation>S</variation>
    <location>
        <position position="19"/>
    </location>
</feature>